<feature type="chain" id="PRO_0000195596" description="ATP synthase protein 8">
    <location>
        <begin position="1"/>
        <end position="48"/>
    </location>
</feature>
<feature type="transmembrane region" description="Helical" evidence="2">
    <location>
        <begin position="4"/>
        <end position="24"/>
    </location>
</feature>
<sequence length="48" mass="5772">MPQLVPFFFVNQVVYAFVILTVLIYAFTKFILPKFVRIFISRIYINKL</sequence>
<gene>
    <name type="primary">atp8</name>
</gene>
<proteinExistence type="inferred from homology"/>
<protein>
    <recommendedName>
        <fullName>ATP synthase protein 8</fullName>
    </recommendedName>
    <alternativeName>
        <fullName>A6L</fullName>
    </alternativeName>
    <alternativeName>
        <fullName>F-ATPase subunit 8</fullName>
    </alternativeName>
</protein>
<comment type="function">
    <text evidence="1">Mitochondrial membrane ATP synthase (F(1)F(0) ATP synthase or Complex V) produces ATP from ADP in the presence of a proton gradient across the membrane which is generated by electron transport complexes of the respiratory chain. F-type ATPases consist of two structural domains, F(1) - containing the extramembraneous catalytic core and F(0) - containing the membrane proton channel, linked together by a central stalk and a peripheral stalk. During catalysis, ATP synthesis in the catalytic domain of F(1) is coupled via a rotary mechanism of the central stalk subunits to proton translocation. Part of the complex F(0) domain. Minor subunit located with subunit a in the membrane (By similarity).</text>
</comment>
<comment type="subunit">
    <text evidence="1">F-type ATPases have 2 components, CF(1) - the catalytic core - and CF(0) - the membrane proton channel.</text>
</comment>
<comment type="subcellular location">
    <subcellularLocation>
        <location>Mitochondrion membrane</location>
        <topology>Single-pass membrane protein</topology>
    </subcellularLocation>
</comment>
<comment type="similarity">
    <text evidence="3">Belongs to the ATPase protein 8 family.</text>
</comment>
<evidence type="ECO:0000250" key="1"/>
<evidence type="ECO:0000255" key="2"/>
<evidence type="ECO:0000305" key="3"/>
<keyword id="KW-0066">ATP synthesis</keyword>
<keyword id="KW-0138">CF(0)</keyword>
<keyword id="KW-0375">Hydrogen ion transport</keyword>
<keyword id="KW-0406">Ion transport</keyword>
<keyword id="KW-0472">Membrane</keyword>
<keyword id="KW-0496">Mitochondrion</keyword>
<keyword id="KW-0812">Transmembrane</keyword>
<keyword id="KW-1133">Transmembrane helix</keyword>
<keyword id="KW-0813">Transport</keyword>
<organism>
    <name type="scientific">Aspergillus amstelodami</name>
    <dbReference type="NCBI Taxonomy" id="5054"/>
    <lineage>
        <taxon>Eukaryota</taxon>
        <taxon>Fungi</taxon>
        <taxon>Dikarya</taxon>
        <taxon>Ascomycota</taxon>
        <taxon>Pezizomycotina</taxon>
        <taxon>Eurotiomycetes</taxon>
        <taxon>Eurotiomycetidae</taxon>
        <taxon>Eurotiales</taxon>
        <taxon>Aspergillaceae</taxon>
        <taxon>Aspergillus</taxon>
        <taxon>Aspergillus subgen. Aspergillus</taxon>
    </lineage>
</organism>
<dbReference type="PIR" id="A01069">
    <property type="entry name" value="EWAS8M"/>
</dbReference>
<dbReference type="SMR" id="P00858"/>
<dbReference type="GO" id="GO:0031966">
    <property type="term" value="C:mitochondrial membrane"/>
    <property type="evidence" value="ECO:0007669"/>
    <property type="project" value="UniProtKB-SubCell"/>
</dbReference>
<dbReference type="GO" id="GO:0045259">
    <property type="term" value="C:proton-transporting ATP synthase complex"/>
    <property type="evidence" value="ECO:0007669"/>
    <property type="project" value="UniProtKB-KW"/>
</dbReference>
<dbReference type="GO" id="GO:0046933">
    <property type="term" value="F:proton-transporting ATP synthase activity, rotational mechanism"/>
    <property type="evidence" value="ECO:0007669"/>
    <property type="project" value="TreeGrafter"/>
</dbReference>
<dbReference type="InterPro" id="IPR009230">
    <property type="entry name" value="ATP_synth_su8_fun"/>
</dbReference>
<dbReference type="PANTHER" id="PTHR36101">
    <property type="entry name" value="ATP SYNTHASE PROTEIN 8"/>
    <property type="match status" value="1"/>
</dbReference>
<dbReference type="PANTHER" id="PTHR36101:SF1">
    <property type="entry name" value="ATP SYNTHASE PROTEIN 8"/>
    <property type="match status" value="1"/>
</dbReference>
<dbReference type="Pfam" id="PF05933">
    <property type="entry name" value="Fun_ATP-synt_8"/>
    <property type="match status" value="1"/>
</dbReference>
<name>ATP8_ASPAM</name>
<accession>P00858</accession>
<reference key="1">
    <citation type="submission" date="1984-03" db="PIR data bank">
        <authorList>
            <person name="Lazarus C.M."/>
            <person name="Kuntzel H."/>
        </authorList>
    </citation>
    <scope>NUCLEOTIDE SEQUENCE [GENOMIC DNA]</scope>
</reference>
<geneLocation type="mitochondrion"/>